<name>DOC_BPP1</name>
<accession>Q06259</accession>
<comment type="function">
    <text evidence="2 3 6 7">Toxic component of a type II toxin-antitoxin (TA) system (PubMed:18398006, PubMed:24141193). Phosphorylates EF-Tu on 'Thr-383' in vitro; can use ATP or GTP (PubMed:24141193). Also dephosphorylates in the presence of ADP or GDP. Can only phosphorylate before the ternary aminoacyl-tRNA EF-Tu-GTP complex is formed; interaction with cognate antitoxin phd prevents phosphorylation and dephosphorylation of EF-Tu. Overexpression results in inhibition of growth in liquid cultures and a decrease in colony formation by inhibiting translation, stabilizing mRNA and polysomes; these effects are overcome by concomitant expression of antitoxin phd. Binds 70S ribosomes and the 30S ribosomal subunits, the binding site is the same as for the antibiotic hygromycin B (PubMed:18398006). Bacteriophage P1 lysogenizes bacteria as a low-copy number plasmid; doc and phd proteins function in unison to stabilize plasmid number by inducing a lethal response to P1 plasmid prophage loss (PubMed:8411153). Overexpression of doc can induce the mRNA interferase activity of host RelE in vivo (PubMed:18757857).</text>
</comment>
<comment type="function">
    <text evidence="4 8">Antitoxin phd binds to its own promoter repressing its expression; toxin doc acts as a corepressor or derepressor depending on the ratio, repressing or inducing expression.</text>
</comment>
<comment type="catalytic activity">
    <reaction>
        <text>L-seryl-[protein] + ATP = O-phospho-L-seryl-[protein] + ADP + H(+)</text>
        <dbReference type="Rhea" id="RHEA:17989"/>
        <dbReference type="Rhea" id="RHEA-COMP:9863"/>
        <dbReference type="Rhea" id="RHEA-COMP:11604"/>
        <dbReference type="ChEBI" id="CHEBI:15378"/>
        <dbReference type="ChEBI" id="CHEBI:29999"/>
        <dbReference type="ChEBI" id="CHEBI:30616"/>
        <dbReference type="ChEBI" id="CHEBI:83421"/>
        <dbReference type="ChEBI" id="CHEBI:456216"/>
        <dbReference type="EC" id="2.7.11.1"/>
    </reaction>
</comment>
<comment type="catalytic activity">
    <reaction>
        <text>L-threonyl-[protein] + ATP = O-phospho-L-threonyl-[protein] + ADP + H(+)</text>
        <dbReference type="Rhea" id="RHEA:46608"/>
        <dbReference type="Rhea" id="RHEA-COMP:11060"/>
        <dbReference type="Rhea" id="RHEA-COMP:11605"/>
        <dbReference type="ChEBI" id="CHEBI:15378"/>
        <dbReference type="ChEBI" id="CHEBI:30013"/>
        <dbReference type="ChEBI" id="CHEBI:30616"/>
        <dbReference type="ChEBI" id="CHEBI:61977"/>
        <dbReference type="ChEBI" id="CHEBI:456216"/>
        <dbReference type="EC" id="2.7.11.1"/>
    </reaction>
</comment>
<comment type="subunit">
    <text evidence="2 3 5 8">Interacts with cognate antitoxin phd, the exact ratio of doc:phd varies from 1:1 to 1:3. Interaction with phd prevents kinase or phosphorylase activity on EF-Tu. Interacts with the 30S ribosomal subunit.</text>
</comment>
<comment type="interaction">
    <interactant intactId="EBI-2908816">
        <id>Q06259</id>
    </interactant>
    <interactant intactId="EBI-2908787">
        <id>Q06253</id>
        <label>phd</label>
    </interactant>
    <organismsDiffer>false</organismsDiffer>
    <experiments>4</experiments>
</comment>
<comment type="interaction">
    <interactant intactId="EBI-2908816">
        <id>Q06259</id>
    </interactant>
    <interactant intactId="EBI-301077">
        <id>P0CE47</id>
        <label>tufA</label>
    </interactant>
    <organismsDiffer>true</organismsDiffer>
    <experiments>5</experiments>
</comment>
<comment type="miscellaneous">
    <text evidence="9">The concentration of antitoxin phd in P1 lysogens is far greater than that of the toxin it antagonizes. Such an excess may assure the well-being of carriers of the addicting plasmid.</text>
</comment>
<organism>
    <name type="scientific">Escherichia phage P1</name>
    <name type="common">Bacteriophage P1</name>
    <dbReference type="NCBI Taxonomy" id="2886926"/>
    <lineage>
        <taxon>Viruses</taxon>
        <taxon>Duplodnaviria</taxon>
        <taxon>Heunggongvirae</taxon>
        <taxon>Uroviricota</taxon>
        <taxon>Caudoviricetes</taxon>
        <taxon>Punavirus</taxon>
        <taxon>Punavirus P1</taxon>
    </lineage>
</organism>
<gene>
    <name type="primary">doc</name>
</gene>
<keyword id="KW-0002">3D-structure</keyword>
<keyword id="KW-0067">ATP-binding</keyword>
<keyword id="KW-0238">DNA-binding</keyword>
<keyword id="KW-0418">Kinase</keyword>
<keyword id="KW-0547">Nucleotide-binding</keyword>
<keyword id="KW-1185">Reference proteome</keyword>
<keyword id="KW-0678">Repressor</keyword>
<keyword id="KW-1277">Toxin-antitoxin system</keyword>
<keyword id="KW-0804">Transcription</keyword>
<keyword id="KW-0805">Transcription regulation</keyword>
<keyword id="KW-0808">Transferase</keyword>
<keyword id="KW-0810">Translation regulation</keyword>
<reference key="1">
    <citation type="journal article" date="1993" name="J. Mol. Biol.">
        <title>Plasmid addiction genes of bacteriophage P1: doc, which causes cell death on curing of prophage, and phd, which prevents host death when prophage is retained.</title>
        <authorList>
            <person name="Lehnherr H."/>
            <person name="Maguin E."/>
            <person name="Jafri S."/>
            <person name="Yarmolinsky M.B."/>
        </authorList>
    </citation>
    <scope>NUCLEOTIDE SEQUENCE</scope>
</reference>
<reference key="2">
    <citation type="journal article" date="2004" name="J. Bacteriol.">
        <title>Genome of bacteriophage P1.</title>
        <authorList>
            <person name="Lobocka M.B."/>
            <person name="Rose D.J."/>
            <person name="Plunkett G. III"/>
            <person name="Rusin M."/>
            <person name="Samojedny A."/>
            <person name="Lehnherr H."/>
            <person name="Yarmolinsky M.B."/>
            <person name="Blattner F.R."/>
        </authorList>
    </citation>
    <scope>NUCLEOTIDE SEQUENCE [LARGE SCALE GENOMIC DNA]</scope>
</reference>
<reference key="3">
    <citation type="journal article" date="1998" name="J. Bacteriol.">
        <title>Corepression of the P1 addiction operon by Phd and Doc.</title>
        <authorList>
            <person name="Magnuson R."/>
            <person name="Yarmolinsky M.B."/>
        </authorList>
    </citation>
    <scope>FUNCTION AS A TRANSCRIPTION REGULATOR</scope>
    <scope>SUBUNIT</scope>
    <scope>MUTAGENESIS OF LEU-12; HIS-66; ASP-70; ALA-76; LEU-82; LEU-84 AND LEU-118</scope>
</reference>
<reference key="4">
    <citation type="journal article" date="2008" name="Proc. Natl. Acad. Sci. U.S.A.">
        <title>Bacterial addiction module toxin Doc inhibits translation elongation through its association with the 30S ribosomal subunit.</title>
        <authorList>
            <person name="Liu M."/>
            <person name="Zhang Y."/>
            <person name="Inouye M."/>
            <person name="Woychik N.A."/>
        </authorList>
    </citation>
    <scope>FUNCTION AS A TOXIN</scope>
    <scope>SUBUNIT</scope>
    <scope>BINDING TO RIBOSOMES AND THE SMALL RIBOSOMAL SUBUNIT</scope>
</reference>
<reference key="5">
    <citation type="journal article" date="2013" name="Nat. Chem. Biol.">
        <title>The Fic protein Doc uses an inverted substrate to phosphorylate and inactivate EF-Tu.</title>
        <authorList>
            <person name="Castro-Roa D."/>
            <person name="Garcia-Pino A."/>
            <person name="De Gieter S."/>
            <person name="van Nuland N.A."/>
            <person name="Loris R."/>
            <person name="Zenkin N."/>
        </authorList>
    </citation>
    <scope>FUNCTION AS A KINASE</scope>
    <scope>FUNCTION AS A TRANSLATION INHIBITOR</scope>
    <scope>MUTAGENESIS OF ARG-64; HIS-66 AND ASN-78</scope>
</reference>
<reference key="6">
    <citation type="journal article" date="2008" name="J. Biol. Chem.">
        <title>Doc of prophage P1 is inhibited by its antitoxin partner Phd through fold complementation.</title>
        <authorList>
            <person name="Garcia-Pino A."/>
            <person name="Christensen-Dalsgaard M."/>
            <person name="Wyns L."/>
            <person name="Yarmolinsky M."/>
            <person name="Magnuson R.D."/>
            <person name="Gerdes K."/>
            <person name="Loris R."/>
        </authorList>
    </citation>
    <scope>X-RAY CRYSTALLOGRAPHY (1.7 ANGSTROMS) OF 1-125 IN COMPLEX WITH A PHD FRAGMENT</scope>
    <scope>EFFECT ON RELE</scope>
</reference>
<reference key="7">
    <citation type="journal article" date="2010" name="Cell">
        <title>Allostery and intrinsic disorder mediate transcription regulation by conditional cooperativity.</title>
        <authorList>
            <person name="Garcia-Pino A."/>
            <person name="Balasubramanian S."/>
            <person name="Wyns L."/>
            <person name="Gazit E."/>
            <person name="De Greve H."/>
            <person name="Magnuson R.D."/>
            <person name="Charlier D."/>
            <person name="van Nuland N.A."/>
            <person name="Loris R."/>
        </authorList>
    </citation>
    <scope>X-RAY CRYSTALLOGRAPHY (2.4 ANGSTROMS)</scope>
    <scope>MODE OF TRANSCRIPTION REGULATION</scope>
</reference>
<reference key="8">
    <citation type="journal article" date="2010" name="Structure">
        <title>Crystal structures of Phd-Doc, HigA, and YeeU establish multiple evolutionary links between microbial growth-regulating toxin-antitoxin systems.</title>
        <authorList>
            <person name="Arbing M.A."/>
            <person name="Handelman S.K."/>
            <person name="Kuzin A.P."/>
            <person name="Verdon G."/>
            <person name="Wang C."/>
            <person name="Su M."/>
            <person name="Rothenbacher F.P."/>
            <person name="Abashidze M."/>
            <person name="Liu M."/>
            <person name="Hurley J.M."/>
            <person name="Xiao R."/>
            <person name="Acton T."/>
            <person name="Inouye M."/>
            <person name="Montelione G.T."/>
            <person name="Woychik N.A."/>
            <person name="Hunt J.F."/>
        </authorList>
    </citation>
    <scope>X-RAY CRYSTALLOGRAPHY (2.71 ANGSTROMS)</scope>
    <scope>SUBUNIT</scope>
</reference>
<protein>
    <recommendedName>
        <fullName>Protein kinase doc</fullName>
        <ecNumber evidence="6">2.7.11.1</ecNumber>
    </recommendedName>
    <alternativeName>
        <fullName>Death on curing protein</fullName>
    </alternativeName>
    <alternativeName>
        <fullName>Toxin doc</fullName>
    </alternativeName>
</protein>
<evidence type="ECO:0000255" key="1">
    <source>
        <dbReference type="PROSITE-ProRule" id="PRU00791"/>
    </source>
</evidence>
<evidence type="ECO:0000269" key="2">
    <source>
    </source>
</evidence>
<evidence type="ECO:0000269" key="3">
    <source>
    </source>
</evidence>
<evidence type="ECO:0000269" key="4">
    <source>
    </source>
</evidence>
<evidence type="ECO:0000269" key="5">
    <source>
    </source>
</evidence>
<evidence type="ECO:0000269" key="6">
    <source>
    </source>
</evidence>
<evidence type="ECO:0000269" key="7">
    <source>
    </source>
</evidence>
<evidence type="ECO:0000269" key="8">
    <source>
    </source>
</evidence>
<evidence type="ECO:0000305" key="9">
    <source>
    </source>
</evidence>
<evidence type="ECO:0007829" key="10">
    <source>
        <dbReference type="PDB" id="3DD7"/>
    </source>
</evidence>
<organismHost>
    <name type="scientific">Enterobacteriaceae</name>
    <dbReference type="NCBI Taxonomy" id="543"/>
</organismHost>
<dbReference type="EC" id="2.7.11.1" evidence="6"/>
<dbReference type="EMBL" id="M95666">
    <property type="protein sequence ID" value="AAA16931.1"/>
    <property type="molecule type" value="Unassigned_DNA"/>
</dbReference>
<dbReference type="EMBL" id="AF234172">
    <property type="protein sequence ID" value="AAQ14075.1"/>
    <property type="molecule type" value="Genomic_DNA"/>
</dbReference>
<dbReference type="PIR" id="S40016">
    <property type="entry name" value="S40016"/>
</dbReference>
<dbReference type="RefSeq" id="YP_006571.1">
    <property type="nucleotide sequence ID" value="NC_005856.1"/>
</dbReference>
<dbReference type="PDB" id="3DD7">
    <property type="method" value="X-ray"/>
    <property type="resolution" value="1.70 A"/>
    <property type="chains" value="A/C=1-126"/>
</dbReference>
<dbReference type="PDB" id="3DD9">
    <property type="method" value="X-ray"/>
    <property type="resolution" value="2.45 A"/>
    <property type="chains" value="A/B/C/D/E/F/G/H=1-126"/>
</dbReference>
<dbReference type="PDB" id="3K33">
    <property type="method" value="X-ray"/>
    <property type="resolution" value="2.40 A"/>
    <property type="chains" value="A=1-126"/>
</dbReference>
<dbReference type="PDB" id="3KH2">
    <property type="method" value="X-ray"/>
    <property type="resolution" value="2.71 A"/>
    <property type="chains" value="A/B/C/D=1-126"/>
</dbReference>
<dbReference type="PDBsum" id="3DD7"/>
<dbReference type="PDBsum" id="3DD9"/>
<dbReference type="PDBsum" id="3K33"/>
<dbReference type="PDBsum" id="3KH2"/>
<dbReference type="BMRB" id="Q06259"/>
<dbReference type="SMR" id="Q06259"/>
<dbReference type="DIP" id="DIP-61743N"/>
<dbReference type="IntAct" id="Q06259">
    <property type="interactions" value="2"/>
</dbReference>
<dbReference type="GeneID" id="2777474"/>
<dbReference type="KEGG" id="vg:2777474"/>
<dbReference type="EvolutionaryTrace" id="Q06259"/>
<dbReference type="Proteomes" id="UP000008091">
    <property type="component" value="Genome"/>
</dbReference>
<dbReference type="GO" id="GO:0005524">
    <property type="term" value="F:ATP binding"/>
    <property type="evidence" value="ECO:0007669"/>
    <property type="project" value="UniProtKB-KW"/>
</dbReference>
<dbReference type="GO" id="GO:0003677">
    <property type="term" value="F:DNA binding"/>
    <property type="evidence" value="ECO:0007669"/>
    <property type="project" value="UniProtKB-KW"/>
</dbReference>
<dbReference type="GO" id="GO:0106310">
    <property type="term" value="F:protein serine kinase activity"/>
    <property type="evidence" value="ECO:0007669"/>
    <property type="project" value="RHEA"/>
</dbReference>
<dbReference type="GO" id="GO:0004674">
    <property type="term" value="F:protein serine/threonine kinase activity"/>
    <property type="evidence" value="ECO:0000314"/>
    <property type="project" value="CACAO"/>
</dbReference>
<dbReference type="GO" id="GO:0044696">
    <property type="term" value="P:killing by virus of host cell by post-segregational killing"/>
    <property type="evidence" value="ECO:0000315"/>
    <property type="project" value="CACAO"/>
</dbReference>
<dbReference type="GO" id="GO:0006417">
    <property type="term" value="P:regulation of translation"/>
    <property type="evidence" value="ECO:0007669"/>
    <property type="project" value="UniProtKB-KW"/>
</dbReference>
<dbReference type="GO" id="GO:0039604">
    <property type="term" value="P:symbiont-mediated suppression of host translation"/>
    <property type="evidence" value="ECO:0000314"/>
    <property type="project" value="CACAO"/>
</dbReference>
<dbReference type="FunFam" id="1.20.120.1870:FF:000001">
    <property type="entry name" value="Death on curing protein, Doc toxin"/>
    <property type="match status" value="1"/>
</dbReference>
<dbReference type="Gene3D" id="1.20.120.1870">
    <property type="entry name" value="Fic/DOC protein, Fido domain"/>
    <property type="match status" value="1"/>
</dbReference>
<dbReference type="InterPro" id="IPR006440">
    <property type="entry name" value="Doc"/>
</dbReference>
<dbReference type="InterPro" id="IPR003812">
    <property type="entry name" value="Fido"/>
</dbReference>
<dbReference type="InterPro" id="IPR053737">
    <property type="entry name" value="Type_II_TA_Toxin"/>
</dbReference>
<dbReference type="NCBIfam" id="TIGR01550">
    <property type="entry name" value="DOC_P1"/>
    <property type="match status" value="1"/>
</dbReference>
<dbReference type="PANTHER" id="PTHR39426">
    <property type="entry name" value="HOMOLOGY TO DEATH-ON-CURING PROTEIN OF PHAGE P1"/>
    <property type="match status" value="1"/>
</dbReference>
<dbReference type="PANTHER" id="PTHR39426:SF1">
    <property type="entry name" value="HOMOLOGY TO DEATH-ON-CURING PROTEIN OF PHAGE P1"/>
    <property type="match status" value="1"/>
</dbReference>
<dbReference type="Pfam" id="PF02661">
    <property type="entry name" value="Fic"/>
    <property type="match status" value="1"/>
</dbReference>
<dbReference type="PIRSF" id="PIRSF018297">
    <property type="entry name" value="Doc"/>
    <property type="match status" value="1"/>
</dbReference>
<dbReference type="PROSITE" id="PS51459">
    <property type="entry name" value="FIDO"/>
    <property type="match status" value="1"/>
</dbReference>
<proteinExistence type="evidence at protein level"/>
<sequence>MRHISPEELIALHDANISRYGGLPGMSDPGRAEAIIGRVQARVAYEEITDLFEVSATYLVATARGHIFNDANKRTALNSALLFLRRNGVQVFDSPELADLTVGAATGEISVSSVADTLRRLYGSAE</sequence>
<feature type="chain" id="PRO_0000165273" description="Protein kinase doc">
    <location>
        <begin position="1"/>
        <end position="126"/>
    </location>
</feature>
<feature type="domain" description="Fido" evidence="1">
    <location>
        <begin position="4"/>
        <end position="120"/>
    </location>
</feature>
<feature type="mutagenesis site" description="Loss of toxin and transcriptional regulatory activity." evidence="8">
    <original>L</original>
    <variation>P</variation>
    <location>
        <position position="12"/>
    </location>
</feature>
<feature type="mutagenesis site" description="No binding to EF-Tu-GDP." evidence="6">
    <original>R</original>
    <variation>G</variation>
    <location>
        <position position="64"/>
    </location>
</feature>
<feature type="mutagenesis site" description="Loss of toxin but not transcriptional regulatory activity." evidence="6 8">
    <original>H</original>
    <variation>R</variation>
    <variation>Y</variation>
    <location>
        <position position="66"/>
    </location>
</feature>
<feature type="mutagenesis site" description="Loss of toxin but not transcriptional regulatory activity." evidence="8">
    <original>D</original>
    <variation>N</variation>
    <location>
        <position position="70"/>
    </location>
</feature>
<feature type="mutagenesis site" description="Loss of toxin but not transcriptional regulatory activity." evidence="8">
    <original>A</original>
    <variation>E</variation>
    <location>
        <position position="76"/>
    </location>
</feature>
<feature type="mutagenesis site" description="No change in binding to EF-Tu, 100-fold decrease of affinity of doc-EF-Tu-GTP complex for AMP-PNP (probably also ATP)." evidence="6">
    <original>N</original>
    <variation>W</variation>
    <location>
        <position position="78"/>
    </location>
</feature>
<feature type="mutagenesis site" description="Loss of toxin and transcriptional regulatory activity." evidence="8">
    <original>L</original>
    <variation>P</variation>
    <location>
        <position position="82"/>
    </location>
</feature>
<feature type="mutagenesis site" description="Loss of toxin and transcriptional regulatory activity." evidence="8">
    <original>L</original>
    <variation>P</variation>
    <location>
        <position position="84"/>
    </location>
</feature>
<feature type="mutagenesis site" description="Loss of toxin and transcriptional regulatory activity." evidence="8">
    <original>L</original>
    <variation>P</variation>
    <location>
        <position position="118"/>
    </location>
</feature>
<feature type="helix" evidence="10">
    <location>
        <begin position="6"/>
        <end position="20"/>
    </location>
</feature>
<feature type="strand" evidence="10">
    <location>
        <begin position="25"/>
        <end position="28"/>
    </location>
</feature>
<feature type="helix" evidence="10">
    <location>
        <begin position="31"/>
        <end position="45"/>
    </location>
</feature>
<feature type="helix" evidence="10">
    <location>
        <begin position="51"/>
        <end position="65"/>
    </location>
</feature>
<feature type="strand" evidence="10">
    <location>
        <begin position="68"/>
        <end position="70"/>
    </location>
</feature>
<feature type="helix" evidence="10">
    <location>
        <begin position="72"/>
        <end position="86"/>
    </location>
</feature>
<feature type="helix" evidence="10">
    <location>
        <begin position="97"/>
        <end position="105"/>
    </location>
</feature>
<feature type="helix" evidence="10">
    <location>
        <begin position="111"/>
        <end position="122"/>
    </location>
</feature>